<evidence type="ECO:0000250" key="1">
    <source>
        <dbReference type="UniProtKB" id="P0AFG3"/>
    </source>
</evidence>
<evidence type="ECO:0000305" key="2"/>
<comment type="function">
    <text evidence="1">E1 component of the 2-oxoglutarate dehydrogenase (OGDH) complex which catalyzes the decarboxylation of 2-oxoglutarate, the first step in the conversion of 2-oxoglutarate to succinyl-CoA and CO(2).</text>
</comment>
<comment type="catalytic activity">
    <reaction evidence="1">
        <text>N(6)-[(R)-lipoyl]-L-lysyl-[protein] + 2-oxoglutarate + H(+) = N(6)-[(R)-S(8)-succinyldihydrolipoyl]-L-lysyl-[protein] + CO2</text>
        <dbReference type="Rhea" id="RHEA:12188"/>
        <dbReference type="Rhea" id="RHEA-COMP:10474"/>
        <dbReference type="Rhea" id="RHEA-COMP:20092"/>
        <dbReference type="ChEBI" id="CHEBI:15378"/>
        <dbReference type="ChEBI" id="CHEBI:16526"/>
        <dbReference type="ChEBI" id="CHEBI:16810"/>
        <dbReference type="ChEBI" id="CHEBI:83099"/>
        <dbReference type="ChEBI" id="CHEBI:83120"/>
        <dbReference type="EC" id="1.2.4.2"/>
    </reaction>
</comment>
<comment type="cofactor">
    <cofactor evidence="1">
        <name>thiamine diphosphate</name>
        <dbReference type="ChEBI" id="CHEBI:58937"/>
    </cofactor>
</comment>
<comment type="subunit">
    <text evidence="1">Homodimer. Part of the 2-oxoglutarate dehydrogenase (OGDH) complex composed of E1 (2-oxoglutarate dehydrogenase), E2 (dihydrolipoamide succinyltransferase) and E3 (dihydrolipoamide dehydrogenase); the complex contains multiple copies of the three enzymatic components (E1, E2 and E3). Interacts (via N-terminus) with SucB, the E2 component of OGDH complex.</text>
</comment>
<comment type="similarity">
    <text evidence="2">Belongs to the alpha-ketoglutarate dehydrogenase family.</text>
</comment>
<protein>
    <recommendedName>
        <fullName>2-oxoglutarate dehydrogenase E1 component</fullName>
        <ecNumber evidence="1">1.2.4.2</ecNumber>
    </recommendedName>
    <alternativeName>
        <fullName>Alpha-ketoglutarate dehydrogenase</fullName>
    </alternativeName>
</protein>
<reference key="1">
    <citation type="journal article" date="2001" name="Nature">
        <title>Genome sequence of enterohaemorrhagic Escherichia coli O157:H7.</title>
        <authorList>
            <person name="Perna N.T."/>
            <person name="Plunkett G. III"/>
            <person name="Burland V."/>
            <person name="Mau B."/>
            <person name="Glasner J.D."/>
            <person name="Rose D.J."/>
            <person name="Mayhew G.F."/>
            <person name="Evans P.S."/>
            <person name="Gregor J."/>
            <person name="Kirkpatrick H.A."/>
            <person name="Posfai G."/>
            <person name="Hackett J."/>
            <person name="Klink S."/>
            <person name="Boutin A."/>
            <person name="Shao Y."/>
            <person name="Miller L."/>
            <person name="Grotbeck E.J."/>
            <person name="Davis N.W."/>
            <person name="Lim A."/>
            <person name="Dimalanta E.T."/>
            <person name="Potamousis K."/>
            <person name="Apodaca J."/>
            <person name="Anantharaman T.S."/>
            <person name="Lin J."/>
            <person name="Yen G."/>
            <person name="Schwartz D.C."/>
            <person name="Welch R.A."/>
            <person name="Blattner F.R."/>
        </authorList>
    </citation>
    <scope>NUCLEOTIDE SEQUENCE [LARGE SCALE GENOMIC DNA]</scope>
    <source>
        <strain>O157:H7 / EDL933 / ATCC 700927 / EHEC</strain>
    </source>
</reference>
<reference key="2">
    <citation type="journal article" date="2001" name="DNA Res.">
        <title>Complete genome sequence of enterohemorrhagic Escherichia coli O157:H7 and genomic comparison with a laboratory strain K-12.</title>
        <authorList>
            <person name="Hayashi T."/>
            <person name="Makino K."/>
            <person name="Ohnishi M."/>
            <person name="Kurokawa K."/>
            <person name="Ishii K."/>
            <person name="Yokoyama K."/>
            <person name="Han C.-G."/>
            <person name="Ohtsubo E."/>
            <person name="Nakayama K."/>
            <person name="Murata T."/>
            <person name="Tanaka M."/>
            <person name="Tobe T."/>
            <person name="Iida T."/>
            <person name="Takami H."/>
            <person name="Honda T."/>
            <person name="Sasakawa C."/>
            <person name="Ogasawara N."/>
            <person name="Yasunaga T."/>
            <person name="Kuhara S."/>
            <person name="Shiba T."/>
            <person name="Hattori M."/>
            <person name="Shinagawa H."/>
        </authorList>
    </citation>
    <scope>NUCLEOTIDE SEQUENCE [LARGE SCALE GENOMIC DNA]</scope>
    <source>
        <strain>O157:H7 / Sakai / RIMD 0509952 / EHEC</strain>
    </source>
</reference>
<organism>
    <name type="scientific">Escherichia coli O157:H7</name>
    <dbReference type="NCBI Taxonomy" id="83334"/>
    <lineage>
        <taxon>Bacteria</taxon>
        <taxon>Pseudomonadati</taxon>
        <taxon>Pseudomonadota</taxon>
        <taxon>Gammaproteobacteria</taxon>
        <taxon>Enterobacterales</taxon>
        <taxon>Enterobacteriaceae</taxon>
        <taxon>Escherichia</taxon>
    </lineage>
</organism>
<name>ODO1_ECO57</name>
<keyword id="KW-0560">Oxidoreductase</keyword>
<keyword id="KW-1185">Reference proteome</keyword>
<keyword id="KW-0786">Thiamine pyrophosphate</keyword>
<keyword id="KW-0816">Tricarboxylic acid cycle</keyword>
<proteinExistence type="inferred from homology"/>
<sequence>MQNSALKAWLDSSYLSGANQSWIEQLYEDFLTDPDSVDANWRSTFQQLPGTGVKPDQFHSQTREYFRRLAKDASRYSSTISDPDTNVKQVKVLQLINAYRFRGHQHANLDPLGLWQQDKVADLDPSFHDLTEADFQETFNVGSFASGKETMKLGELLEALKQTYCGPIGAEYMHITSTEEKRWIQQRIESGRATFNSEEKKRFLSELTAAEGLERYLGAKFPGAKRFSLEGGDALIPMLKEMIRHAGNSGTREVVLGMAHRGRLNVLVNVLGKKPQDLFDEFAGKHKEHLGTGDVKYHMGFSSDFQTDGGLVHLALAFNPSHLEIVSPVVIGSVRARLDRLDEPSSNKVLPITIHGDAAVTGQGVVQETLNMSKARGYEVGGTVRIVINNQVGFTTSNPLDARSTPYCTDIGKMVQAPIFHVNADDPEAVAFVTRLALDFRNTFKRDVFIDLVCYRRHGHNEADEPSATQPLMYQKIKKHPTPRKIYADKLEQEKVATLEDATEMVNLYRDALDAGDCVVAEWRPMNMHSFTWSPYLNHEWDEEYPNKVEMKRLQELAKRISTVPEAVEMQSRVAKIYGDRQAMAAGEKLFDWGGAENLAYATLVDEGIPVRLSGEDSGRGTFFHRHAVIHNQSNGSTYTPLQHIHNGQGAFRVWDSVLSEEAVLAFEYGYATAEPRTLTIWEAQFGDFANGAQVVIDQFISSGEQKWGRMCGLVMLLPHGYEGQGPEHSSARLERYLQLCAEQNMQVCVPSTPAQVYHMLRRQALRGMRRPLVVMSPKSLLRHPLAVSSLEELANGTFLPAIGEIDELDPKGVKRVVMCSGKVYYDLLEQRRKNNQHDVAIVRIEQLYPFPHKAMQEVLQQFAHVKDFVWCQEEPLNQGAWYCSQHHFREVIPFGASLRYAGRPASASPAVGYMSVHQKQQQDLVNDALNVE</sequence>
<accession>P0AFG5</accession>
<accession>P07015</accession>
<accession>P78225</accession>
<gene>
    <name type="primary">sucA</name>
    <name type="ordered locus">Z0880</name>
    <name type="ordered locus">ECs0751</name>
</gene>
<dbReference type="EC" id="1.2.4.2" evidence="1"/>
<dbReference type="EMBL" id="AE005174">
    <property type="protein sequence ID" value="AAG55050.1"/>
    <property type="molecule type" value="Genomic_DNA"/>
</dbReference>
<dbReference type="EMBL" id="BA000007">
    <property type="protein sequence ID" value="BAB34174.1"/>
    <property type="molecule type" value="Genomic_DNA"/>
</dbReference>
<dbReference type="PIR" id="G90722">
    <property type="entry name" value="G90722"/>
</dbReference>
<dbReference type="RefSeq" id="NP_308778.1">
    <property type="nucleotide sequence ID" value="NC_002695.1"/>
</dbReference>
<dbReference type="RefSeq" id="WP_001181473.1">
    <property type="nucleotide sequence ID" value="NZ_VOAI01000019.1"/>
</dbReference>
<dbReference type="SMR" id="P0AFG5"/>
<dbReference type="STRING" id="155864.Z0880"/>
<dbReference type="GeneID" id="75205557"/>
<dbReference type="GeneID" id="917481"/>
<dbReference type="KEGG" id="ece:Z0880"/>
<dbReference type="KEGG" id="ecs:ECs_0751"/>
<dbReference type="PATRIC" id="fig|386585.9.peg.869"/>
<dbReference type="eggNOG" id="COG0567">
    <property type="taxonomic scope" value="Bacteria"/>
</dbReference>
<dbReference type="HOGENOM" id="CLU_004709_1_0_6"/>
<dbReference type="OMA" id="RDSYCRT"/>
<dbReference type="Proteomes" id="UP000000558">
    <property type="component" value="Chromosome"/>
</dbReference>
<dbReference type="Proteomes" id="UP000002519">
    <property type="component" value="Chromosome"/>
</dbReference>
<dbReference type="GO" id="GO:0005829">
    <property type="term" value="C:cytosol"/>
    <property type="evidence" value="ECO:0007669"/>
    <property type="project" value="TreeGrafter"/>
</dbReference>
<dbReference type="GO" id="GO:0045252">
    <property type="term" value="C:oxoglutarate dehydrogenase complex"/>
    <property type="evidence" value="ECO:0007669"/>
    <property type="project" value="TreeGrafter"/>
</dbReference>
<dbReference type="GO" id="GO:0004591">
    <property type="term" value="F:oxoglutarate dehydrogenase (succinyl-transferring) activity"/>
    <property type="evidence" value="ECO:0007669"/>
    <property type="project" value="UniProtKB-EC"/>
</dbReference>
<dbReference type="GO" id="GO:0030976">
    <property type="term" value="F:thiamine pyrophosphate binding"/>
    <property type="evidence" value="ECO:0007669"/>
    <property type="project" value="InterPro"/>
</dbReference>
<dbReference type="GO" id="GO:0006099">
    <property type="term" value="P:tricarboxylic acid cycle"/>
    <property type="evidence" value="ECO:0007669"/>
    <property type="project" value="UniProtKB-KW"/>
</dbReference>
<dbReference type="CDD" id="cd02016">
    <property type="entry name" value="TPP_E1_OGDC_like"/>
    <property type="match status" value="1"/>
</dbReference>
<dbReference type="FunFam" id="1.10.287.1150:FF:000004">
    <property type="entry name" value="2-oxoglutarate dehydrogenase E1 component"/>
    <property type="match status" value="1"/>
</dbReference>
<dbReference type="FunFam" id="3.40.50.11610:FF:000001">
    <property type="entry name" value="2-oxoglutarate dehydrogenase E1 component"/>
    <property type="match status" value="1"/>
</dbReference>
<dbReference type="FunFam" id="3.40.50.12470:FF:000002">
    <property type="entry name" value="2-oxoglutarate dehydrogenase E1 component"/>
    <property type="match status" value="1"/>
</dbReference>
<dbReference type="FunFam" id="3.40.50.970:FF:000014">
    <property type="entry name" value="2-oxoglutarate dehydrogenase E1 component"/>
    <property type="match status" value="1"/>
</dbReference>
<dbReference type="Gene3D" id="3.40.50.12470">
    <property type="match status" value="1"/>
</dbReference>
<dbReference type="Gene3D" id="3.40.50.970">
    <property type="match status" value="1"/>
</dbReference>
<dbReference type="Gene3D" id="3.40.50.11610">
    <property type="entry name" value="Multifunctional 2-oxoglutarate metabolism enzyme, C-terminal domain"/>
    <property type="match status" value="1"/>
</dbReference>
<dbReference type="Gene3D" id="1.10.287.1150">
    <property type="entry name" value="TPP helical domain"/>
    <property type="match status" value="1"/>
</dbReference>
<dbReference type="InterPro" id="IPR032106">
    <property type="entry name" value="2-oxogl_dehyd_N"/>
</dbReference>
<dbReference type="InterPro" id="IPR011603">
    <property type="entry name" value="2oxoglutarate_DH_E1"/>
</dbReference>
<dbReference type="InterPro" id="IPR001017">
    <property type="entry name" value="DH_E1"/>
</dbReference>
<dbReference type="InterPro" id="IPR042179">
    <property type="entry name" value="KGD_C_sf"/>
</dbReference>
<dbReference type="InterPro" id="IPR031717">
    <property type="entry name" value="ODO-1/KGD_C"/>
</dbReference>
<dbReference type="InterPro" id="IPR029061">
    <property type="entry name" value="THDP-binding"/>
</dbReference>
<dbReference type="InterPro" id="IPR005475">
    <property type="entry name" value="Transketolase-like_Pyr-bd"/>
</dbReference>
<dbReference type="NCBIfam" id="TIGR00239">
    <property type="entry name" value="2oxo_dh_E1"/>
    <property type="match status" value="1"/>
</dbReference>
<dbReference type="NCBIfam" id="NF006914">
    <property type="entry name" value="PRK09404.1"/>
    <property type="match status" value="1"/>
</dbReference>
<dbReference type="NCBIfam" id="NF008907">
    <property type="entry name" value="PRK12270.1"/>
    <property type="match status" value="1"/>
</dbReference>
<dbReference type="PANTHER" id="PTHR23152:SF4">
    <property type="entry name" value="2-OXOADIPATE DEHYDROGENASE COMPLEX COMPONENT E1"/>
    <property type="match status" value="1"/>
</dbReference>
<dbReference type="PANTHER" id="PTHR23152">
    <property type="entry name" value="2-OXOGLUTARATE DEHYDROGENASE"/>
    <property type="match status" value="1"/>
</dbReference>
<dbReference type="Pfam" id="PF16078">
    <property type="entry name" value="2-oxogl_dehyd_N"/>
    <property type="match status" value="1"/>
</dbReference>
<dbReference type="Pfam" id="PF00676">
    <property type="entry name" value="E1_dh"/>
    <property type="match status" value="1"/>
</dbReference>
<dbReference type="Pfam" id="PF16870">
    <property type="entry name" value="OxoGdeHyase_C"/>
    <property type="match status" value="1"/>
</dbReference>
<dbReference type="Pfam" id="PF02779">
    <property type="entry name" value="Transket_pyr"/>
    <property type="match status" value="1"/>
</dbReference>
<dbReference type="PIRSF" id="PIRSF000157">
    <property type="entry name" value="Oxoglu_dh_E1"/>
    <property type="match status" value="1"/>
</dbReference>
<dbReference type="SMART" id="SM00861">
    <property type="entry name" value="Transket_pyr"/>
    <property type="match status" value="1"/>
</dbReference>
<dbReference type="SUPFAM" id="SSF52518">
    <property type="entry name" value="Thiamin diphosphate-binding fold (THDP-binding)"/>
    <property type="match status" value="2"/>
</dbReference>
<feature type="chain" id="PRO_0000162192" description="2-oxoglutarate dehydrogenase E1 component">
    <location>
        <begin position="1"/>
        <end position="933"/>
    </location>
</feature>